<name>RL5_METAC</name>
<reference key="1">
    <citation type="journal article" date="2002" name="Genome Res.">
        <title>The genome of Methanosarcina acetivorans reveals extensive metabolic and physiological diversity.</title>
        <authorList>
            <person name="Galagan J.E."/>
            <person name="Nusbaum C."/>
            <person name="Roy A."/>
            <person name="Endrizzi M.G."/>
            <person name="Macdonald P."/>
            <person name="FitzHugh W."/>
            <person name="Calvo S."/>
            <person name="Engels R."/>
            <person name="Smirnov S."/>
            <person name="Atnoor D."/>
            <person name="Brown A."/>
            <person name="Allen N."/>
            <person name="Naylor J."/>
            <person name="Stange-Thomann N."/>
            <person name="DeArellano K."/>
            <person name="Johnson R."/>
            <person name="Linton L."/>
            <person name="McEwan P."/>
            <person name="McKernan K."/>
            <person name="Talamas J."/>
            <person name="Tirrell A."/>
            <person name="Ye W."/>
            <person name="Zimmer A."/>
            <person name="Barber R.D."/>
            <person name="Cann I."/>
            <person name="Graham D.E."/>
            <person name="Grahame D.A."/>
            <person name="Guss A.M."/>
            <person name="Hedderich R."/>
            <person name="Ingram-Smith C."/>
            <person name="Kuettner H.C."/>
            <person name="Krzycki J.A."/>
            <person name="Leigh J.A."/>
            <person name="Li W."/>
            <person name="Liu J."/>
            <person name="Mukhopadhyay B."/>
            <person name="Reeve J.N."/>
            <person name="Smith K."/>
            <person name="Springer T.A."/>
            <person name="Umayam L.A."/>
            <person name="White O."/>
            <person name="White R.H."/>
            <person name="de Macario E.C."/>
            <person name="Ferry J.G."/>
            <person name="Jarrell K.F."/>
            <person name="Jing H."/>
            <person name="Macario A.J.L."/>
            <person name="Paulsen I.T."/>
            <person name="Pritchett M."/>
            <person name="Sowers K.R."/>
            <person name="Swanson R.V."/>
            <person name="Zinder S.H."/>
            <person name="Lander E."/>
            <person name="Metcalf W.W."/>
            <person name="Birren B."/>
        </authorList>
    </citation>
    <scope>NUCLEOTIDE SEQUENCE [LARGE SCALE GENOMIC DNA]</scope>
    <source>
        <strain>ATCC 35395 / DSM 2834 / JCM 12185 / C2A</strain>
    </source>
</reference>
<proteinExistence type="inferred from homology"/>
<gene>
    <name evidence="1" type="primary">rpl5</name>
    <name type="ordered locus">MA_1085</name>
</gene>
<accession>Q8TRT4</accession>
<organism>
    <name type="scientific">Methanosarcina acetivorans (strain ATCC 35395 / DSM 2834 / JCM 12185 / C2A)</name>
    <dbReference type="NCBI Taxonomy" id="188937"/>
    <lineage>
        <taxon>Archaea</taxon>
        <taxon>Methanobacteriati</taxon>
        <taxon>Methanobacteriota</taxon>
        <taxon>Stenosarchaea group</taxon>
        <taxon>Methanomicrobia</taxon>
        <taxon>Methanosarcinales</taxon>
        <taxon>Methanosarcinaceae</taxon>
        <taxon>Methanosarcina</taxon>
    </lineage>
</organism>
<comment type="function">
    <text evidence="1">This is one of the proteins that bind and probably mediate the attachment of the 5S RNA into the large ribosomal subunit, where it forms part of the central protuberance. In the 70S ribosome it contacts protein S13 of the 30S subunit (bridge B1b), connecting the 2 subunits; this bridge is implicated in subunit movement. May contact the P site tRNA; the 5S rRNA and some of its associated proteins might help stabilize positioning of ribosome-bound tRNAs.</text>
</comment>
<comment type="subunit">
    <text evidence="1">Part of the 50S ribosomal subunit; contacts the 5S rRNA and probably tRNA. Forms a bridge to the 30S subunit in the 70S ribosome.</text>
</comment>
<comment type="similarity">
    <text evidence="1">Belongs to the universal ribosomal protein uL5 family.</text>
</comment>
<protein>
    <recommendedName>
        <fullName evidence="1">Large ribosomal subunit protein uL5</fullName>
    </recommendedName>
    <alternativeName>
        <fullName evidence="2">50S ribosomal protein L5</fullName>
    </alternativeName>
</protein>
<feature type="chain" id="PRO_0000125055" description="Large ribosomal subunit protein uL5">
    <location>
        <begin position="1"/>
        <end position="165"/>
    </location>
</feature>
<keyword id="KW-1185">Reference proteome</keyword>
<keyword id="KW-0687">Ribonucleoprotein</keyword>
<keyword id="KW-0689">Ribosomal protein</keyword>
<keyword id="KW-0694">RNA-binding</keyword>
<keyword id="KW-0699">rRNA-binding</keyword>
<keyword id="KW-0820">tRNA-binding</keyword>
<dbReference type="EMBL" id="AE010299">
    <property type="protein sequence ID" value="AAM04510.1"/>
    <property type="molecule type" value="Genomic_DNA"/>
</dbReference>
<dbReference type="RefSeq" id="WP_011021114.1">
    <property type="nucleotide sequence ID" value="NC_003552.1"/>
</dbReference>
<dbReference type="SMR" id="Q8TRT4"/>
<dbReference type="FunCoup" id="Q8TRT4">
    <property type="interactions" value="151"/>
</dbReference>
<dbReference type="STRING" id="188937.MA_1085"/>
<dbReference type="EnsemblBacteria" id="AAM04510">
    <property type="protein sequence ID" value="AAM04510"/>
    <property type="gene ID" value="MA_1085"/>
</dbReference>
<dbReference type="GeneID" id="1472975"/>
<dbReference type="KEGG" id="mac:MA_1085"/>
<dbReference type="HOGENOM" id="CLU_061015_3_0_2"/>
<dbReference type="InParanoid" id="Q8TRT4"/>
<dbReference type="OrthoDB" id="372044at2157"/>
<dbReference type="PhylomeDB" id="Q8TRT4"/>
<dbReference type="Proteomes" id="UP000002487">
    <property type="component" value="Chromosome"/>
</dbReference>
<dbReference type="GO" id="GO:0022625">
    <property type="term" value="C:cytosolic large ribosomal subunit"/>
    <property type="evidence" value="ECO:0000318"/>
    <property type="project" value="GO_Central"/>
</dbReference>
<dbReference type="GO" id="GO:0003723">
    <property type="term" value="F:RNA binding"/>
    <property type="evidence" value="ECO:0000318"/>
    <property type="project" value="GO_Central"/>
</dbReference>
<dbReference type="GO" id="GO:0019843">
    <property type="term" value="F:rRNA binding"/>
    <property type="evidence" value="ECO:0007669"/>
    <property type="project" value="UniProtKB-UniRule"/>
</dbReference>
<dbReference type="GO" id="GO:0003735">
    <property type="term" value="F:structural constituent of ribosome"/>
    <property type="evidence" value="ECO:0000318"/>
    <property type="project" value="GO_Central"/>
</dbReference>
<dbReference type="GO" id="GO:0000049">
    <property type="term" value="F:tRNA binding"/>
    <property type="evidence" value="ECO:0007669"/>
    <property type="project" value="UniProtKB-UniRule"/>
</dbReference>
<dbReference type="GO" id="GO:0006412">
    <property type="term" value="P:translation"/>
    <property type="evidence" value="ECO:0000318"/>
    <property type="project" value="GO_Central"/>
</dbReference>
<dbReference type="FunFam" id="3.30.1440.10:FF:000002">
    <property type="entry name" value="60S ribosomal protein L11"/>
    <property type="match status" value="1"/>
</dbReference>
<dbReference type="Gene3D" id="3.30.1440.10">
    <property type="match status" value="1"/>
</dbReference>
<dbReference type="HAMAP" id="MF_01333_A">
    <property type="entry name" value="Ribosomal_uL5_A"/>
    <property type="match status" value="1"/>
</dbReference>
<dbReference type="InterPro" id="IPR002132">
    <property type="entry name" value="Ribosomal_uL5"/>
</dbReference>
<dbReference type="InterPro" id="IPR022804">
    <property type="entry name" value="Ribosomal_uL5_arc"/>
</dbReference>
<dbReference type="InterPro" id="IPR031309">
    <property type="entry name" value="Ribosomal_uL5_C"/>
</dbReference>
<dbReference type="InterPro" id="IPR020929">
    <property type="entry name" value="Ribosomal_uL5_CS"/>
</dbReference>
<dbReference type="InterPro" id="IPR022803">
    <property type="entry name" value="Ribosomal_uL5_dom_sf"/>
</dbReference>
<dbReference type="InterPro" id="IPR031310">
    <property type="entry name" value="Ribosomal_uL5_N"/>
</dbReference>
<dbReference type="NCBIfam" id="NF003258">
    <property type="entry name" value="PRK04219.1"/>
    <property type="match status" value="1"/>
</dbReference>
<dbReference type="PANTHER" id="PTHR11994">
    <property type="entry name" value="60S RIBOSOMAL PROTEIN L11-RELATED"/>
    <property type="match status" value="1"/>
</dbReference>
<dbReference type="Pfam" id="PF00281">
    <property type="entry name" value="Ribosomal_L5"/>
    <property type="match status" value="1"/>
</dbReference>
<dbReference type="Pfam" id="PF00673">
    <property type="entry name" value="Ribosomal_L5_C"/>
    <property type="match status" value="1"/>
</dbReference>
<dbReference type="PIRSF" id="PIRSF002161">
    <property type="entry name" value="Ribosomal_L5"/>
    <property type="match status" value="1"/>
</dbReference>
<dbReference type="SUPFAM" id="SSF55282">
    <property type="entry name" value="RL5-like"/>
    <property type="match status" value="1"/>
</dbReference>
<dbReference type="PROSITE" id="PS00358">
    <property type="entry name" value="RIBOSOMAL_L5"/>
    <property type="match status" value="1"/>
</dbReference>
<evidence type="ECO:0000255" key="1">
    <source>
        <dbReference type="HAMAP-Rule" id="MF_01333"/>
    </source>
</evidence>
<evidence type="ECO:0000305" key="2"/>
<sequence>MRTPIVEKVIVHMGVGESGQHLVNAEDILRNITGQEVVRCFAKRTLPAFSIKKNEPIGCKVTLRGQKAQEFLETALGIVEKTLNRSQFDSFGNVSFGIEEHTDFPGMRYDPNIGVFGMDVTVVLKRPGERICKRRIAARKIPAGHRVTVDDAIAFLNESYGVEVM</sequence>